<gene>
    <name evidence="1" type="primary">metG</name>
    <name type="ordered locus">KPK_1608</name>
</gene>
<feature type="chain" id="PRO_1000093716" description="Methionine--tRNA ligase">
    <location>
        <begin position="1"/>
        <end position="677"/>
    </location>
</feature>
<feature type="domain" description="tRNA-binding" evidence="1">
    <location>
        <begin position="575"/>
        <end position="677"/>
    </location>
</feature>
<feature type="short sequence motif" description="'HIGH' region">
    <location>
        <begin position="15"/>
        <end position="25"/>
    </location>
</feature>
<feature type="short sequence motif" description="'KMSKS' region">
    <location>
        <begin position="333"/>
        <end position="337"/>
    </location>
</feature>
<feature type="binding site" evidence="1">
    <location>
        <position position="146"/>
    </location>
    <ligand>
        <name>Zn(2+)</name>
        <dbReference type="ChEBI" id="CHEBI:29105"/>
    </ligand>
</feature>
<feature type="binding site" evidence="1">
    <location>
        <position position="149"/>
    </location>
    <ligand>
        <name>Zn(2+)</name>
        <dbReference type="ChEBI" id="CHEBI:29105"/>
    </ligand>
</feature>
<feature type="binding site" evidence="1">
    <location>
        <position position="159"/>
    </location>
    <ligand>
        <name>Zn(2+)</name>
        <dbReference type="ChEBI" id="CHEBI:29105"/>
    </ligand>
</feature>
<feature type="binding site" evidence="1">
    <location>
        <position position="162"/>
    </location>
    <ligand>
        <name>Zn(2+)</name>
        <dbReference type="ChEBI" id="CHEBI:29105"/>
    </ligand>
</feature>
<feature type="binding site" evidence="1">
    <location>
        <position position="336"/>
    </location>
    <ligand>
        <name>ATP</name>
        <dbReference type="ChEBI" id="CHEBI:30616"/>
    </ligand>
</feature>
<sequence>MTQVAKKILVTCALPYANGSIHLGHMLEHIQADVWVRYQRMRGHEVNFICADDAHGTPIMLKAQQLGITPEQMIGEMSQEHQTDFAGFDISYDNYHSTHSDENRELSELIYTRLKENGFIKNRTISQLYDPEKGMFLPDRFVKGTCPKCKSPDQYGDNCEVCGATYSPTELIDPKSVVSGATPVMRDSEHFFFDLPSFSEMLQAWTRSGALQEQVANKMQEWFESGLQQWDISRDAPYFGFEIPNAPGKYFYVWLDAPIGYMGSFKNLCDKRGDTTSFDEYWKKDSSAELYHFIGKDIVYFHSLFWPAMLEGSNFRKPTNLFVHGYVTVNGAKMSKSRGTFIKASTWLNHFDADSLRYYYTAKLSSRIDDIDLNLEDFVQRVNADIVNKVVNLASRNAGFISKRFDGVLAAELADPALYKTFTDAAESIGEAWDSREFGKAIREIMALADVANRYVDEQAPWVVAKQEGRDADLQAICTMGLNMFRVLMTWLKPVLPQLAARAEAFLNSELSWDAIQQPLLAHKVNPFKALYNRIEMKQVEALVEASKEEVKATAAPVTGPLADDPIQETITFDDFAKVDLRVALIENAEFVEGSDKLLRLTLDLGGEKRNVFSGIRSAYPDPQPLIGRLTVMVANLAPRKMRFGISEGMVMAAGPGGKDIFLLSPDDGAKPGQQVK</sequence>
<accession>B5XP89</accession>
<comment type="function">
    <text evidence="1">Is required not only for elongation of protein synthesis but also for the initiation of all mRNA translation through initiator tRNA(fMet) aminoacylation.</text>
</comment>
<comment type="catalytic activity">
    <reaction evidence="1">
        <text>tRNA(Met) + L-methionine + ATP = L-methionyl-tRNA(Met) + AMP + diphosphate</text>
        <dbReference type="Rhea" id="RHEA:13481"/>
        <dbReference type="Rhea" id="RHEA-COMP:9667"/>
        <dbReference type="Rhea" id="RHEA-COMP:9698"/>
        <dbReference type="ChEBI" id="CHEBI:30616"/>
        <dbReference type="ChEBI" id="CHEBI:33019"/>
        <dbReference type="ChEBI" id="CHEBI:57844"/>
        <dbReference type="ChEBI" id="CHEBI:78442"/>
        <dbReference type="ChEBI" id="CHEBI:78530"/>
        <dbReference type="ChEBI" id="CHEBI:456215"/>
        <dbReference type="EC" id="6.1.1.10"/>
    </reaction>
</comment>
<comment type="cofactor">
    <cofactor evidence="1">
        <name>Zn(2+)</name>
        <dbReference type="ChEBI" id="CHEBI:29105"/>
    </cofactor>
    <text evidence="1">Binds 1 zinc ion per subunit.</text>
</comment>
<comment type="subunit">
    <text evidence="1">Homodimer.</text>
</comment>
<comment type="subcellular location">
    <subcellularLocation>
        <location evidence="1">Cytoplasm</location>
    </subcellularLocation>
</comment>
<comment type="similarity">
    <text evidence="1">Belongs to the class-I aminoacyl-tRNA synthetase family. MetG type 1 subfamily.</text>
</comment>
<name>SYM_KLEP3</name>
<keyword id="KW-0030">Aminoacyl-tRNA synthetase</keyword>
<keyword id="KW-0067">ATP-binding</keyword>
<keyword id="KW-0963">Cytoplasm</keyword>
<keyword id="KW-0436">Ligase</keyword>
<keyword id="KW-0479">Metal-binding</keyword>
<keyword id="KW-0547">Nucleotide-binding</keyword>
<keyword id="KW-0648">Protein biosynthesis</keyword>
<keyword id="KW-0694">RNA-binding</keyword>
<keyword id="KW-0820">tRNA-binding</keyword>
<keyword id="KW-0862">Zinc</keyword>
<reference key="1">
    <citation type="journal article" date="2008" name="PLoS Genet.">
        <title>Complete genome sequence of the N2-fixing broad host range endophyte Klebsiella pneumoniae 342 and virulence predictions verified in mice.</title>
        <authorList>
            <person name="Fouts D.E."/>
            <person name="Tyler H.L."/>
            <person name="DeBoy R.T."/>
            <person name="Daugherty S."/>
            <person name="Ren Q."/>
            <person name="Badger J.H."/>
            <person name="Durkin A.S."/>
            <person name="Huot H."/>
            <person name="Shrivastava S."/>
            <person name="Kothari S."/>
            <person name="Dodson R.J."/>
            <person name="Mohamoud Y."/>
            <person name="Khouri H."/>
            <person name="Roesch L.F.W."/>
            <person name="Krogfelt K.A."/>
            <person name="Struve C."/>
            <person name="Triplett E.W."/>
            <person name="Methe B.A."/>
        </authorList>
    </citation>
    <scope>NUCLEOTIDE SEQUENCE [LARGE SCALE GENOMIC DNA]</scope>
    <source>
        <strain>342</strain>
    </source>
</reference>
<evidence type="ECO:0000255" key="1">
    <source>
        <dbReference type="HAMAP-Rule" id="MF_00098"/>
    </source>
</evidence>
<proteinExistence type="inferred from homology"/>
<protein>
    <recommendedName>
        <fullName evidence="1">Methionine--tRNA ligase</fullName>
        <ecNumber evidence="1">6.1.1.10</ecNumber>
    </recommendedName>
    <alternativeName>
        <fullName evidence="1">Methionyl-tRNA synthetase</fullName>
        <shortName evidence="1">MetRS</shortName>
    </alternativeName>
</protein>
<dbReference type="EC" id="6.1.1.10" evidence="1"/>
<dbReference type="EMBL" id="CP000964">
    <property type="protein sequence ID" value="ACI11950.1"/>
    <property type="molecule type" value="Genomic_DNA"/>
</dbReference>
<dbReference type="SMR" id="B5XP89"/>
<dbReference type="KEGG" id="kpe:KPK_1608"/>
<dbReference type="HOGENOM" id="CLU_009710_7_0_6"/>
<dbReference type="Proteomes" id="UP000001734">
    <property type="component" value="Chromosome"/>
</dbReference>
<dbReference type="GO" id="GO:0005829">
    <property type="term" value="C:cytosol"/>
    <property type="evidence" value="ECO:0007669"/>
    <property type="project" value="TreeGrafter"/>
</dbReference>
<dbReference type="GO" id="GO:0005524">
    <property type="term" value="F:ATP binding"/>
    <property type="evidence" value="ECO:0007669"/>
    <property type="project" value="UniProtKB-UniRule"/>
</dbReference>
<dbReference type="GO" id="GO:0046872">
    <property type="term" value="F:metal ion binding"/>
    <property type="evidence" value="ECO:0007669"/>
    <property type="project" value="UniProtKB-KW"/>
</dbReference>
<dbReference type="GO" id="GO:0004825">
    <property type="term" value="F:methionine-tRNA ligase activity"/>
    <property type="evidence" value="ECO:0007669"/>
    <property type="project" value="UniProtKB-UniRule"/>
</dbReference>
<dbReference type="GO" id="GO:0000049">
    <property type="term" value="F:tRNA binding"/>
    <property type="evidence" value="ECO:0007669"/>
    <property type="project" value="UniProtKB-KW"/>
</dbReference>
<dbReference type="GO" id="GO:0006431">
    <property type="term" value="P:methionyl-tRNA aminoacylation"/>
    <property type="evidence" value="ECO:0007669"/>
    <property type="project" value="UniProtKB-UniRule"/>
</dbReference>
<dbReference type="CDD" id="cd07957">
    <property type="entry name" value="Anticodon_Ia_Met"/>
    <property type="match status" value="1"/>
</dbReference>
<dbReference type="CDD" id="cd00814">
    <property type="entry name" value="MetRS_core"/>
    <property type="match status" value="1"/>
</dbReference>
<dbReference type="CDD" id="cd02800">
    <property type="entry name" value="tRNA_bind_EcMetRS_like"/>
    <property type="match status" value="1"/>
</dbReference>
<dbReference type="FunFam" id="1.10.730.10:FF:000005">
    <property type="entry name" value="Methionine--tRNA ligase"/>
    <property type="match status" value="1"/>
</dbReference>
<dbReference type="FunFam" id="2.20.28.20:FF:000001">
    <property type="entry name" value="Methionine--tRNA ligase"/>
    <property type="match status" value="1"/>
</dbReference>
<dbReference type="FunFam" id="2.40.50.140:FF:000042">
    <property type="entry name" value="Methionine--tRNA ligase"/>
    <property type="match status" value="1"/>
</dbReference>
<dbReference type="Gene3D" id="3.40.50.620">
    <property type="entry name" value="HUPs"/>
    <property type="match status" value="1"/>
</dbReference>
<dbReference type="Gene3D" id="1.10.730.10">
    <property type="entry name" value="Isoleucyl-tRNA Synthetase, Domain 1"/>
    <property type="match status" value="1"/>
</dbReference>
<dbReference type="Gene3D" id="2.20.28.20">
    <property type="entry name" value="Methionyl-tRNA synthetase, Zn-domain"/>
    <property type="match status" value="1"/>
</dbReference>
<dbReference type="Gene3D" id="2.40.50.140">
    <property type="entry name" value="Nucleic acid-binding proteins"/>
    <property type="match status" value="1"/>
</dbReference>
<dbReference type="HAMAP" id="MF_00098">
    <property type="entry name" value="Met_tRNA_synth_type1"/>
    <property type="match status" value="1"/>
</dbReference>
<dbReference type="InterPro" id="IPR001412">
    <property type="entry name" value="aa-tRNA-synth_I_CS"/>
</dbReference>
<dbReference type="InterPro" id="IPR041872">
    <property type="entry name" value="Anticodon_Met"/>
</dbReference>
<dbReference type="InterPro" id="IPR004495">
    <property type="entry name" value="Met-tRNA-synth_bsu_C"/>
</dbReference>
<dbReference type="InterPro" id="IPR023458">
    <property type="entry name" value="Met-tRNA_ligase_1"/>
</dbReference>
<dbReference type="InterPro" id="IPR014758">
    <property type="entry name" value="Met-tRNA_synth"/>
</dbReference>
<dbReference type="InterPro" id="IPR015413">
    <property type="entry name" value="Methionyl/Leucyl_tRNA_Synth"/>
</dbReference>
<dbReference type="InterPro" id="IPR033911">
    <property type="entry name" value="MetRS_core"/>
</dbReference>
<dbReference type="InterPro" id="IPR029038">
    <property type="entry name" value="MetRS_Zn"/>
</dbReference>
<dbReference type="InterPro" id="IPR012340">
    <property type="entry name" value="NA-bd_OB-fold"/>
</dbReference>
<dbReference type="InterPro" id="IPR014729">
    <property type="entry name" value="Rossmann-like_a/b/a_fold"/>
</dbReference>
<dbReference type="InterPro" id="IPR002547">
    <property type="entry name" value="tRNA-bd_dom"/>
</dbReference>
<dbReference type="InterPro" id="IPR009080">
    <property type="entry name" value="tRNAsynth_Ia_anticodon-bd"/>
</dbReference>
<dbReference type="NCBIfam" id="TIGR00398">
    <property type="entry name" value="metG"/>
    <property type="match status" value="1"/>
</dbReference>
<dbReference type="NCBIfam" id="TIGR00399">
    <property type="entry name" value="metG_C_term"/>
    <property type="match status" value="1"/>
</dbReference>
<dbReference type="NCBIfam" id="NF001100">
    <property type="entry name" value="PRK00133.1"/>
    <property type="match status" value="1"/>
</dbReference>
<dbReference type="PANTHER" id="PTHR45765">
    <property type="entry name" value="METHIONINE--TRNA LIGASE"/>
    <property type="match status" value="1"/>
</dbReference>
<dbReference type="PANTHER" id="PTHR45765:SF1">
    <property type="entry name" value="METHIONINE--TRNA LIGASE, CYTOPLASMIC"/>
    <property type="match status" value="1"/>
</dbReference>
<dbReference type="Pfam" id="PF19303">
    <property type="entry name" value="Anticodon_3"/>
    <property type="match status" value="1"/>
</dbReference>
<dbReference type="Pfam" id="PF09334">
    <property type="entry name" value="tRNA-synt_1g"/>
    <property type="match status" value="1"/>
</dbReference>
<dbReference type="Pfam" id="PF01588">
    <property type="entry name" value="tRNA_bind"/>
    <property type="match status" value="1"/>
</dbReference>
<dbReference type="PRINTS" id="PR01041">
    <property type="entry name" value="TRNASYNTHMET"/>
</dbReference>
<dbReference type="SUPFAM" id="SSF47323">
    <property type="entry name" value="Anticodon-binding domain of a subclass of class I aminoacyl-tRNA synthetases"/>
    <property type="match status" value="1"/>
</dbReference>
<dbReference type="SUPFAM" id="SSF57770">
    <property type="entry name" value="Methionyl-tRNA synthetase (MetRS), Zn-domain"/>
    <property type="match status" value="1"/>
</dbReference>
<dbReference type="SUPFAM" id="SSF50249">
    <property type="entry name" value="Nucleic acid-binding proteins"/>
    <property type="match status" value="1"/>
</dbReference>
<dbReference type="SUPFAM" id="SSF52374">
    <property type="entry name" value="Nucleotidylyl transferase"/>
    <property type="match status" value="1"/>
</dbReference>
<dbReference type="PROSITE" id="PS00178">
    <property type="entry name" value="AA_TRNA_LIGASE_I"/>
    <property type="match status" value="1"/>
</dbReference>
<dbReference type="PROSITE" id="PS50886">
    <property type="entry name" value="TRBD"/>
    <property type="match status" value="1"/>
</dbReference>
<organism>
    <name type="scientific">Klebsiella pneumoniae (strain 342)</name>
    <dbReference type="NCBI Taxonomy" id="507522"/>
    <lineage>
        <taxon>Bacteria</taxon>
        <taxon>Pseudomonadati</taxon>
        <taxon>Pseudomonadota</taxon>
        <taxon>Gammaproteobacteria</taxon>
        <taxon>Enterobacterales</taxon>
        <taxon>Enterobacteriaceae</taxon>
        <taxon>Klebsiella/Raoultella group</taxon>
        <taxon>Klebsiella</taxon>
        <taxon>Klebsiella pneumoniae complex</taxon>
    </lineage>
</organism>